<organism>
    <name type="scientific">Shewanella pealeana (strain ATCC 700345 / ANG-SQ1)</name>
    <dbReference type="NCBI Taxonomy" id="398579"/>
    <lineage>
        <taxon>Bacteria</taxon>
        <taxon>Pseudomonadati</taxon>
        <taxon>Pseudomonadota</taxon>
        <taxon>Gammaproteobacteria</taxon>
        <taxon>Alteromonadales</taxon>
        <taxon>Shewanellaceae</taxon>
        <taxon>Shewanella</taxon>
    </lineage>
</organism>
<name>MUTS_SHEPA</name>
<dbReference type="EMBL" id="CP000851">
    <property type="protein sequence ID" value="ABV86521.1"/>
    <property type="molecule type" value="Genomic_DNA"/>
</dbReference>
<dbReference type="RefSeq" id="WP_012154448.1">
    <property type="nucleotide sequence ID" value="NC_009901.1"/>
</dbReference>
<dbReference type="SMR" id="A8H1T4"/>
<dbReference type="STRING" id="398579.Spea_1194"/>
<dbReference type="KEGG" id="spl:Spea_1194"/>
<dbReference type="eggNOG" id="COG0249">
    <property type="taxonomic scope" value="Bacteria"/>
</dbReference>
<dbReference type="HOGENOM" id="CLU_002472_4_0_6"/>
<dbReference type="OrthoDB" id="9802448at2"/>
<dbReference type="Proteomes" id="UP000002608">
    <property type="component" value="Chromosome"/>
</dbReference>
<dbReference type="GO" id="GO:0005829">
    <property type="term" value="C:cytosol"/>
    <property type="evidence" value="ECO:0007669"/>
    <property type="project" value="TreeGrafter"/>
</dbReference>
<dbReference type="GO" id="GO:0005524">
    <property type="term" value="F:ATP binding"/>
    <property type="evidence" value="ECO:0007669"/>
    <property type="project" value="UniProtKB-UniRule"/>
</dbReference>
<dbReference type="GO" id="GO:0140664">
    <property type="term" value="F:ATP-dependent DNA damage sensor activity"/>
    <property type="evidence" value="ECO:0007669"/>
    <property type="project" value="InterPro"/>
</dbReference>
<dbReference type="GO" id="GO:0003684">
    <property type="term" value="F:damaged DNA binding"/>
    <property type="evidence" value="ECO:0007669"/>
    <property type="project" value="UniProtKB-UniRule"/>
</dbReference>
<dbReference type="GO" id="GO:0030983">
    <property type="term" value="F:mismatched DNA binding"/>
    <property type="evidence" value="ECO:0007669"/>
    <property type="project" value="InterPro"/>
</dbReference>
<dbReference type="GO" id="GO:0006298">
    <property type="term" value="P:mismatch repair"/>
    <property type="evidence" value="ECO:0007669"/>
    <property type="project" value="UniProtKB-UniRule"/>
</dbReference>
<dbReference type="CDD" id="cd03284">
    <property type="entry name" value="ABC_MutS1"/>
    <property type="match status" value="1"/>
</dbReference>
<dbReference type="FunFam" id="1.10.1420.10:FF:000002">
    <property type="entry name" value="DNA mismatch repair protein MutS"/>
    <property type="match status" value="1"/>
</dbReference>
<dbReference type="FunFam" id="3.30.420.110:FF:000001">
    <property type="entry name" value="DNA mismatch repair protein MutS"/>
    <property type="match status" value="1"/>
</dbReference>
<dbReference type="FunFam" id="3.40.1170.10:FF:000001">
    <property type="entry name" value="DNA mismatch repair protein MutS"/>
    <property type="match status" value="1"/>
</dbReference>
<dbReference type="FunFam" id="3.40.50.300:FF:000283">
    <property type="entry name" value="DNA mismatch repair protein MutS"/>
    <property type="match status" value="1"/>
</dbReference>
<dbReference type="Gene3D" id="1.10.1420.10">
    <property type="match status" value="2"/>
</dbReference>
<dbReference type="Gene3D" id="6.10.140.430">
    <property type="match status" value="1"/>
</dbReference>
<dbReference type="Gene3D" id="3.40.1170.10">
    <property type="entry name" value="DNA repair protein MutS, domain I"/>
    <property type="match status" value="1"/>
</dbReference>
<dbReference type="Gene3D" id="3.30.420.110">
    <property type="entry name" value="MutS, connector domain"/>
    <property type="match status" value="1"/>
</dbReference>
<dbReference type="Gene3D" id="3.40.50.300">
    <property type="entry name" value="P-loop containing nucleotide triphosphate hydrolases"/>
    <property type="match status" value="1"/>
</dbReference>
<dbReference type="HAMAP" id="MF_00096">
    <property type="entry name" value="MutS"/>
    <property type="match status" value="1"/>
</dbReference>
<dbReference type="InterPro" id="IPR005748">
    <property type="entry name" value="DNA_mismatch_repair_MutS"/>
</dbReference>
<dbReference type="InterPro" id="IPR007695">
    <property type="entry name" value="DNA_mismatch_repair_MutS-lik_N"/>
</dbReference>
<dbReference type="InterPro" id="IPR017261">
    <property type="entry name" value="DNA_mismatch_repair_MutS/MSH"/>
</dbReference>
<dbReference type="InterPro" id="IPR000432">
    <property type="entry name" value="DNA_mismatch_repair_MutS_C"/>
</dbReference>
<dbReference type="InterPro" id="IPR007861">
    <property type="entry name" value="DNA_mismatch_repair_MutS_clamp"/>
</dbReference>
<dbReference type="InterPro" id="IPR007696">
    <property type="entry name" value="DNA_mismatch_repair_MutS_core"/>
</dbReference>
<dbReference type="InterPro" id="IPR016151">
    <property type="entry name" value="DNA_mismatch_repair_MutS_N"/>
</dbReference>
<dbReference type="InterPro" id="IPR036187">
    <property type="entry name" value="DNA_mismatch_repair_MutS_sf"/>
</dbReference>
<dbReference type="InterPro" id="IPR007860">
    <property type="entry name" value="DNA_mmatch_repair_MutS_con_dom"/>
</dbReference>
<dbReference type="InterPro" id="IPR045076">
    <property type="entry name" value="MutS"/>
</dbReference>
<dbReference type="InterPro" id="IPR036678">
    <property type="entry name" value="MutS_con_dom_sf"/>
</dbReference>
<dbReference type="InterPro" id="IPR027417">
    <property type="entry name" value="P-loop_NTPase"/>
</dbReference>
<dbReference type="NCBIfam" id="TIGR01070">
    <property type="entry name" value="mutS1"/>
    <property type="match status" value="1"/>
</dbReference>
<dbReference type="NCBIfam" id="NF003810">
    <property type="entry name" value="PRK05399.1"/>
    <property type="match status" value="1"/>
</dbReference>
<dbReference type="PANTHER" id="PTHR11361:SF34">
    <property type="entry name" value="DNA MISMATCH REPAIR PROTEIN MSH1, MITOCHONDRIAL"/>
    <property type="match status" value="1"/>
</dbReference>
<dbReference type="PANTHER" id="PTHR11361">
    <property type="entry name" value="DNA MISMATCH REPAIR PROTEIN MUTS FAMILY MEMBER"/>
    <property type="match status" value="1"/>
</dbReference>
<dbReference type="Pfam" id="PF01624">
    <property type="entry name" value="MutS_I"/>
    <property type="match status" value="1"/>
</dbReference>
<dbReference type="Pfam" id="PF05188">
    <property type="entry name" value="MutS_II"/>
    <property type="match status" value="1"/>
</dbReference>
<dbReference type="Pfam" id="PF05192">
    <property type="entry name" value="MutS_III"/>
    <property type="match status" value="1"/>
</dbReference>
<dbReference type="Pfam" id="PF05190">
    <property type="entry name" value="MutS_IV"/>
    <property type="match status" value="1"/>
</dbReference>
<dbReference type="Pfam" id="PF00488">
    <property type="entry name" value="MutS_V"/>
    <property type="match status" value="1"/>
</dbReference>
<dbReference type="PIRSF" id="PIRSF037677">
    <property type="entry name" value="DNA_mis_repair_Msh6"/>
    <property type="match status" value="1"/>
</dbReference>
<dbReference type="SMART" id="SM00534">
    <property type="entry name" value="MUTSac"/>
    <property type="match status" value="1"/>
</dbReference>
<dbReference type="SMART" id="SM00533">
    <property type="entry name" value="MUTSd"/>
    <property type="match status" value="1"/>
</dbReference>
<dbReference type="SUPFAM" id="SSF55271">
    <property type="entry name" value="DNA repair protein MutS, domain I"/>
    <property type="match status" value="1"/>
</dbReference>
<dbReference type="SUPFAM" id="SSF53150">
    <property type="entry name" value="DNA repair protein MutS, domain II"/>
    <property type="match status" value="1"/>
</dbReference>
<dbReference type="SUPFAM" id="SSF48334">
    <property type="entry name" value="DNA repair protein MutS, domain III"/>
    <property type="match status" value="1"/>
</dbReference>
<dbReference type="SUPFAM" id="SSF52540">
    <property type="entry name" value="P-loop containing nucleoside triphosphate hydrolases"/>
    <property type="match status" value="1"/>
</dbReference>
<dbReference type="PROSITE" id="PS00486">
    <property type="entry name" value="DNA_MISMATCH_REPAIR_2"/>
    <property type="match status" value="1"/>
</dbReference>
<accession>A8H1T4</accession>
<comment type="function">
    <text evidence="1">This protein is involved in the repair of mismatches in DNA. It is possible that it carries out the mismatch recognition step. This protein has a weak ATPase activity.</text>
</comment>
<comment type="similarity">
    <text evidence="1">Belongs to the DNA mismatch repair MutS family.</text>
</comment>
<protein>
    <recommendedName>
        <fullName evidence="1">DNA mismatch repair protein MutS</fullName>
    </recommendedName>
</protein>
<feature type="chain" id="PRO_1000075562" description="DNA mismatch repair protein MutS">
    <location>
        <begin position="1"/>
        <end position="859"/>
    </location>
</feature>
<feature type="region of interest" description="Disordered" evidence="2">
    <location>
        <begin position="803"/>
        <end position="829"/>
    </location>
</feature>
<feature type="compositionally biased region" description="Low complexity" evidence="2">
    <location>
        <begin position="808"/>
        <end position="819"/>
    </location>
</feature>
<feature type="binding site" evidence="1">
    <location>
        <begin position="618"/>
        <end position="625"/>
    </location>
    <ligand>
        <name>ATP</name>
        <dbReference type="ChEBI" id="CHEBI:30616"/>
    </ligand>
</feature>
<keyword id="KW-0067">ATP-binding</keyword>
<keyword id="KW-0227">DNA damage</keyword>
<keyword id="KW-0234">DNA repair</keyword>
<keyword id="KW-0238">DNA-binding</keyword>
<keyword id="KW-0547">Nucleotide-binding</keyword>
<keyword id="KW-1185">Reference proteome</keyword>
<gene>
    <name evidence="1" type="primary">mutS</name>
    <name type="ordered locus">Spea_1194</name>
</gene>
<proteinExistence type="inferred from homology"/>
<evidence type="ECO:0000255" key="1">
    <source>
        <dbReference type="HAMAP-Rule" id="MF_00096"/>
    </source>
</evidence>
<evidence type="ECO:0000256" key="2">
    <source>
        <dbReference type="SAM" id="MobiDB-lite"/>
    </source>
</evidence>
<sequence>MTAIDPQSLEKHTPMMRQYLTLKAQHPDMLLFYRMGDFYELFYEDAKKASELLGISLTARGKSGGDPIPMAGLPYHAVEGYLAKLVQLRVSVAICEQVGDPATSKGPVERKVVRIVTPGTLTDEALLQERQDNLLAALYQGKTGYGYATLDVASGRFVVTELANTEALEAELQRTNPAELLYSEDFSQMSLIAGMNGTRRRPEWEFDYDTCQRMLLNQFGTKDLKGFGIEDARLSLQAAGCLMQYVKDTQRTALPHINSIVRFNQSDSIVLDAATRRNLELTVNLQGGRENTLASVLDNTVTPMGSRMLQRWIHQPLRDHDIIRARQASIAELMMTGDFETLSEDLKALGDVERITARIALRNARPRDFARLRQALTLLPQLQQTLSAASAPHLKYLSQVIGVFPEEVDLLSRAVVDNPPMLIRDGGVIREGYNEELDQWRKLSEGATDYLHELEAREKEQTGISTLKVGYNRVHGYYIEVSRRESDLVPLSYQRRQTLKNTERYIIPELKEHEEKVLSSQGRALALEKQLWEQLFDLILPKLHELQDFAQASAELDVLCNFAERAESLNYHCPELSSISGIHIEAGRHPVVEQVSQSPFIANPVTLNAQRKMLIVTGPNMGGKSTYMRQVALITLMAHIGCYVPAEQAVIGPVDRIFTRIGASDDLASGRSTFMVEMTETANILHNATPNSLVLMDEIGRGTSTYDGLSLAWSAAEYLAKQLQAMTLFATHYFELTQLPEQLSNVENVHLDAVEHGDSIVFMHAVQEGAASRSYGLQVAALAGVPNCVISAAKHKLHQLESRDHDVQQNTEQQGTQQNMSFVPSAPSPAVEALQKLNPDELTPRQALDYLYNLKKLAL</sequence>
<reference key="1">
    <citation type="submission" date="2007-10" db="EMBL/GenBank/DDBJ databases">
        <title>Complete sequence of Shewanella pealeana ATCC 700345.</title>
        <authorList>
            <consortium name="US DOE Joint Genome Institute"/>
            <person name="Copeland A."/>
            <person name="Lucas S."/>
            <person name="Lapidus A."/>
            <person name="Barry K."/>
            <person name="Glavina del Rio T."/>
            <person name="Dalin E."/>
            <person name="Tice H."/>
            <person name="Pitluck S."/>
            <person name="Chertkov O."/>
            <person name="Brettin T."/>
            <person name="Bruce D."/>
            <person name="Detter J.C."/>
            <person name="Han C."/>
            <person name="Schmutz J."/>
            <person name="Larimer F."/>
            <person name="Land M."/>
            <person name="Hauser L."/>
            <person name="Kyrpides N."/>
            <person name="Kim E."/>
            <person name="Zhao J.-S.Z."/>
            <person name="Manno D."/>
            <person name="Hawari J."/>
            <person name="Richardson P."/>
        </authorList>
    </citation>
    <scope>NUCLEOTIDE SEQUENCE [LARGE SCALE GENOMIC DNA]</scope>
    <source>
        <strain>ATCC 700345 / ANG-SQ1</strain>
    </source>
</reference>